<reference key="1">
    <citation type="journal article" date="2003" name="Proc. Natl. Acad. Sci. U.S.A.">
        <title>The complete genome sequence of Mycobacterium bovis.</title>
        <authorList>
            <person name="Garnier T."/>
            <person name="Eiglmeier K."/>
            <person name="Camus J.-C."/>
            <person name="Medina N."/>
            <person name="Mansoor H."/>
            <person name="Pryor M."/>
            <person name="Duthoy S."/>
            <person name="Grondin S."/>
            <person name="Lacroix C."/>
            <person name="Monsempe C."/>
            <person name="Simon S."/>
            <person name="Harris B."/>
            <person name="Atkin R."/>
            <person name="Doggett J."/>
            <person name="Mayes R."/>
            <person name="Keating L."/>
            <person name="Wheeler P.R."/>
            <person name="Parkhill J."/>
            <person name="Barrell B.G."/>
            <person name="Cole S.T."/>
            <person name="Gordon S.V."/>
            <person name="Hewinson R.G."/>
        </authorList>
    </citation>
    <scope>NUCLEOTIDE SEQUENCE [LARGE SCALE GENOMIC DNA]</scope>
    <source>
        <strain>ATCC BAA-935 / AF2122/97</strain>
    </source>
</reference>
<reference key="2">
    <citation type="journal article" date="2017" name="Genome Announc.">
        <title>Updated reference genome sequence and annotation of Mycobacterium bovis AF2122/97.</title>
        <authorList>
            <person name="Malone K.M."/>
            <person name="Farrell D."/>
            <person name="Stuber T.P."/>
            <person name="Schubert O.T."/>
            <person name="Aebersold R."/>
            <person name="Robbe-Austerman S."/>
            <person name="Gordon S.V."/>
        </authorList>
    </citation>
    <scope>NUCLEOTIDE SEQUENCE [LARGE SCALE GENOMIC DNA]</scope>
    <scope>GENOME REANNOTATION</scope>
    <source>
        <strain>ATCC BAA-935 / AF2122/97</strain>
    </source>
</reference>
<keyword id="KW-0276">Fatty acid metabolism</keyword>
<keyword id="KW-0443">Lipid metabolism</keyword>
<keyword id="KW-0456">Lyase</keyword>
<keyword id="KW-1185">Reference proteome</keyword>
<proteinExistence type="inferred from homology"/>
<feature type="chain" id="PRO_0000109339" description="Probable enoyl-CoA hydratase echA12">
    <location>
        <begin position="1"/>
        <end position="285"/>
    </location>
</feature>
<comment type="function">
    <text evidence="1">Could possibly oxidize fatty acids using specific components.</text>
</comment>
<comment type="catalytic activity">
    <reaction>
        <text>a (3S)-3-hydroxyacyl-CoA = a (2E)-enoyl-CoA + H2O</text>
        <dbReference type="Rhea" id="RHEA:16105"/>
        <dbReference type="ChEBI" id="CHEBI:15377"/>
        <dbReference type="ChEBI" id="CHEBI:57318"/>
        <dbReference type="ChEBI" id="CHEBI:58856"/>
        <dbReference type="EC" id="4.2.1.17"/>
    </reaction>
</comment>
<comment type="catalytic activity">
    <reaction>
        <text>a 4-saturated-(3S)-3-hydroxyacyl-CoA = a (3E)-enoyl-CoA + H2O</text>
        <dbReference type="Rhea" id="RHEA:20724"/>
        <dbReference type="ChEBI" id="CHEBI:15377"/>
        <dbReference type="ChEBI" id="CHEBI:58521"/>
        <dbReference type="ChEBI" id="CHEBI:137480"/>
        <dbReference type="EC" id="4.2.1.17"/>
    </reaction>
</comment>
<comment type="similarity">
    <text evidence="2">Belongs to the enoyl-CoA hydratase/isomerase family.</text>
</comment>
<name>ECH12_MYCBO</name>
<organism>
    <name type="scientific">Mycobacterium bovis (strain ATCC BAA-935 / AF2122/97)</name>
    <dbReference type="NCBI Taxonomy" id="233413"/>
    <lineage>
        <taxon>Bacteria</taxon>
        <taxon>Bacillati</taxon>
        <taxon>Actinomycetota</taxon>
        <taxon>Actinomycetes</taxon>
        <taxon>Mycobacteriales</taxon>
        <taxon>Mycobacteriaceae</taxon>
        <taxon>Mycobacterium</taxon>
        <taxon>Mycobacterium tuberculosis complex</taxon>
    </lineage>
</organism>
<accession>Q7U004</accession>
<accession>A0A1R3XYG7</accession>
<accession>X2BIH9</accession>
<dbReference type="EC" id="4.2.1.17"/>
<dbReference type="EMBL" id="LT708304">
    <property type="protein sequence ID" value="SIU00110.1"/>
    <property type="molecule type" value="Genomic_DNA"/>
</dbReference>
<dbReference type="RefSeq" id="NP_855159.1">
    <property type="nucleotide sequence ID" value="NC_002945.3"/>
</dbReference>
<dbReference type="RefSeq" id="WP_003407504.1">
    <property type="nucleotide sequence ID" value="NC_002945.4"/>
</dbReference>
<dbReference type="SMR" id="Q7U004"/>
<dbReference type="KEGG" id="mbo:BQ2027_MB1507"/>
<dbReference type="PATRIC" id="fig|233413.5.peg.1648"/>
<dbReference type="Proteomes" id="UP000001419">
    <property type="component" value="Chromosome"/>
</dbReference>
<dbReference type="GO" id="GO:0004300">
    <property type="term" value="F:enoyl-CoA hydratase activity"/>
    <property type="evidence" value="ECO:0007669"/>
    <property type="project" value="UniProtKB-EC"/>
</dbReference>
<dbReference type="GO" id="GO:0006631">
    <property type="term" value="P:fatty acid metabolic process"/>
    <property type="evidence" value="ECO:0007669"/>
    <property type="project" value="UniProtKB-KW"/>
</dbReference>
<dbReference type="CDD" id="cd06558">
    <property type="entry name" value="crotonase-like"/>
    <property type="match status" value="1"/>
</dbReference>
<dbReference type="FunFam" id="3.90.226.10:FF:000078">
    <property type="entry name" value="Enoyl-CoA hydratase EchA12"/>
    <property type="match status" value="1"/>
</dbReference>
<dbReference type="Gene3D" id="3.90.226.10">
    <property type="entry name" value="2-enoyl-CoA Hydratase, Chain A, domain 1"/>
    <property type="match status" value="1"/>
</dbReference>
<dbReference type="Gene3D" id="1.10.12.10">
    <property type="entry name" value="Lyase 2-enoyl-coa Hydratase, Chain A, domain 2"/>
    <property type="match status" value="1"/>
</dbReference>
<dbReference type="InterPro" id="IPR029045">
    <property type="entry name" value="ClpP/crotonase-like_dom_sf"/>
</dbReference>
<dbReference type="InterPro" id="IPR018376">
    <property type="entry name" value="Enoyl-CoA_hyd/isom_CS"/>
</dbReference>
<dbReference type="InterPro" id="IPR001753">
    <property type="entry name" value="Enoyl-CoA_hydra/iso"/>
</dbReference>
<dbReference type="InterPro" id="IPR014748">
    <property type="entry name" value="Enoyl-CoA_hydra_C"/>
</dbReference>
<dbReference type="NCBIfam" id="NF004519">
    <property type="entry name" value="PRK05864.1"/>
    <property type="match status" value="1"/>
</dbReference>
<dbReference type="PANTHER" id="PTHR43802">
    <property type="entry name" value="ENOYL-COA HYDRATASE"/>
    <property type="match status" value="1"/>
</dbReference>
<dbReference type="PANTHER" id="PTHR43802:SF1">
    <property type="entry name" value="IP11341P-RELATED"/>
    <property type="match status" value="1"/>
</dbReference>
<dbReference type="Pfam" id="PF00378">
    <property type="entry name" value="ECH_1"/>
    <property type="match status" value="1"/>
</dbReference>
<dbReference type="SUPFAM" id="SSF52096">
    <property type="entry name" value="ClpP/crotonase"/>
    <property type="match status" value="1"/>
</dbReference>
<dbReference type="PROSITE" id="PS00166">
    <property type="entry name" value="ENOYL_COA_HYDRATASE"/>
    <property type="match status" value="1"/>
</dbReference>
<protein>
    <recommendedName>
        <fullName>Probable enoyl-CoA hydratase echA12</fullName>
        <ecNumber>4.2.1.17</ecNumber>
    </recommendedName>
</protein>
<gene>
    <name type="primary">echA12</name>
    <name type="ordered locus">BQ2027_MB1507</name>
</gene>
<evidence type="ECO:0000250" key="1"/>
<evidence type="ECO:0000305" key="2"/>
<sequence>MPHRCAAQVVAGYRSTVSLVLVEHPRPEIAQITLNRPERMNSMAFDVMVPLKEALAQVSYDNSVRVVVLTGAGRGFSSGADHKSAGVVPHVENLTRPTYALRSMELLDDVILMLRRLHQPVIAAVNGPAIGGGLCLALAADIRVASSSAYFRAAGINNGLTASELGLSYLLPRAIGSSRAFEIMLTGRDVSAEEAERIGLVSRQVPDEQLLDACYAIAARMAGFSRPGIELTKRTLWSGLDAASLEAHMQAEGLGQLFVRLLTANFEEAVAARAEQRAPVFTDDT</sequence>